<comment type="function">
    <text evidence="2 3 7 8">Catalyzes the first irreversible reaction from fructose-1,6-bisphosphate to fructose-6-phosphate and inorganic phosphate and plays an important regulatory role in sucrose biosynthesis and metabolism (Probable). Its activity is essential to regulate starch levels (PubMed:25743161). Functions in fructose-mediated signaling independently of its catalytic activity in sugar metabolism. May act downstream of ABA2/GIN1, which is involved in abscisic acid (ABA) synthesis to regulate autotrophic transition and modulate early seedling establishment after seed germination (PubMed:21253566).</text>
</comment>
<comment type="catalytic activity">
    <reaction evidence="2">
        <text>beta-D-fructose 1,6-bisphosphate + H2O = beta-D-fructose 6-phosphate + phosphate</text>
        <dbReference type="Rhea" id="RHEA:11064"/>
        <dbReference type="ChEBI" id="CHEBI:15377"/>
        <dbReference type="ChEBI" id="CHEBI:32966"/>
        <dbReference type="ChEBI" id="CHEBI:43474"/>
        <dbReference type="ChEBI" id="CHEBI:57634"/>
        <dbReference type="EC" id="3.1.3.11"/>
    </reaction>
</comment>
<comment type="cofactor">
    <cofactor evidence="1">
        <name>Mg(2+)</name>
        <dbReference type="ChEBI" id="CHEBI:18420"/>
    </cofactor>
    <text evidence="1">Binds 3 Mg(2+) ions per subunit.</text>
</comment>
<comment type="subcellular location">
    <subcellularLocation>
        <location evidence="2">Cytoplasm</location>
    </subcellularLocation>
    <subcellularLocation>
        <location evidence="2">Nucleus</location>
    </subcellularLocation>
</comment>
<comment type="disruption phenotype">
    <text evidence="3">Slight decreased in growth rate.</text>
</comment>
<comment type="miscellaneous">
    <text evidence="6">In plants there are two FBPase isozymes: one in the cytosol and the other in the chloroplast.</text>
</comment>
<comment type="similarity">
    <text evidence="6">Belongs to the FBPase class 1 family.</text>
</comment>
<accession>Q9MA79</accession>
<protein>
    <recommendedName>
        <fullName evidence="6">Fructose-1,6-bisphosphatase, cytosolic</fullName>
        <shortName evidence="6">FBPase</shortName>
        <ecNumber evidence="2">3.1.3.11</ecNumber>
    </recommendedName>
    <alternativeName>
        <fullName evidence="6">D-fructose-1,6-bisphosphate 1-phosphohydrolase</fullName>
    </alternativeName>
    <alternativeName>
        <fullName evidence="4">Protein FRUCTOSE INSENSITIVE 1</fullName>
    </alternativeName>
</protein>
<evidence type="ECO:0000250" key="1"/>
<evidence type="ECO:0000269" key="2">
    <source>
    </source>
</evidence>
<evidence type="ECO:0000269" key="3">
    <source>
    </source>
</evidence>
<evidence type="ECO:0000303" key="4">
    <source>
    </source>
</evidence>
<evidence type="ECO:0000303" key="5">
    <source>
    </source>
</evidence>
<evidence type="ECO:0000305" key="6"/>
<evidence type="ECO:0000305" key="7">
    <source>
    </source>
</evidence>
<evidence type="ECO:0000305" key="8">
    <source>
    </source>
</evidence>
<proteinExistence type="evidence at protein level"/>
<keyword id="KW-0119">Carbohydrate metabolism</keyword>
<keyword id="KW-0963">Cytoplasm</keyword>
<keyword id="KW-0378">Hydrolase</keyword>
<keyword id="KW-0460">Magnesium</keyword>
<keyword id="KW-0479">Metal-binding</keyword>
<keyword id="KW-0539">Nucleus</keyword>
<keyword id="KW-1185">Reference proteome</keyword>
<sequence>MDHAADAHRTDLMTITRFVLNEQSKYPESRGDFTILLSHIVLGCKFVCSAVNKAGLAKLIGLAGETNIQGEEQKKLDVLSNDVFVNALVSSGRTSVLVSEEDEEATFVEPSKRGKYCVVFDPLDGSSNIDCGVSIGTIFGIYTLDHTDEPTTADVLKPGNEMVAAGYCMYGSSCMLVLSTGTGVHGFTLDPSLGEFILTHPDIKIPNKGNIYSVNEGNAQNWDGPTTKYVEKCKFPKDGSPAKSLRYVGSMVADVHRTLLYGGIFLYPADKKSPNGKLRVLYEVFPMSFLMEQAGGQAFTGKKRALDLVPEKIHERSPIFLGSYDDVEEIKALYAEEEKKN</sequence>
<feature type="chain" id="PRO_0000200512" description="Fructose-1,6-bisphosphatase, cytosolic">
    <location>
        <begin position="1"/>
        <end position="341"/>
    </location>
</feature>
<feature type="binding site" evidence="1">
    <location>
        <position position="71"/>
    </location>
    <ligand>
        <name>Mg(2+)</name>
        <dbReference type="ChEBI" id="CHEBI:18420"/>
        <label>1</label>
    </ligand>
</feature>
<feature type="binding site" evidence="1">
    <location>
        <position position="100"/>
    </location>
    <ligand>
        <name>Mg(2+)</name>
        <dbReference type="ChEBI" id="CHEBI:18420"/>
        <label>1</label>
    </ligand>
</feature>
<feature type="binding site" evidence="1">
    <location>
        <position position="100"/>
    </location>
    <ligand>
        <name>Mg(2+)</name>
        <dbReference type="ChEBI" id="CHEBI:18420"/>
        <label>2</label>
    </ligand>
</feature>
<feature type="binding site" evidence="1">
    <location>
        <position position="121"/>
    </location>
    <ligand>
        <name>Mg(2+)</name>
        <dbReference type="ChEBI" id="CHEBI:18420"/>
        <label>2</label>
    </ligand>
</feature>
<feature type="binding site" evidence="1">
    <location>
        <position position="121"/>
    </location>
    <ligand>
        <name>Mg(2+)</name>
        <dbReference type="ChEBI" id="CHEBI:18420"/>
        <label>3</label>
    </ligand>
</feature>
<feature type="binding site" evidence="1">
    <location>
        <position position="123"/>
    </location>
    <ligand>
        <name>Mg(2+)</name>
        <dbReference type="ChEBI" id="CHEBI:18420"/>
        <label>2</label>
    </ligand>
</feature>
<feature type="binding site" evidence="1">
    <location>
        <begin position="124"/>
        <end position="127"/>
    </location>
    <ligand>
        <name>substrate</name>
    </ligand>
</feature>
<feature type="binding site" evidence="1">
    <location>
        <position position="124"/>
    </location>
    <ligand>
        <name>Mg(2+)</name>
        <dbReference type="ChEBI" id="CHEBI:18420"/>
        <label>3</label>
    </ligand>
</feature>
<feature type="binding site" evidence="1">
    <location>
        <position position="215"/>
    </location>
    <ligand>
        <name>substrate</name>
    </ligand>
</feature>
<feature type="binding site" evidence="1">
    <location>
        <position position="247"/>
    </location>
    <ligand>
        <name>substrate</name>
    </ligand>
</feature>
<feature type="binding site" evidence="1">
    <location>
        <position position="267"/>
    </location>
    <ligand>
        <name>substrate</name>
    </ligand>
</feature>
<feature type="binding site" evidence="1">
    <location>
        <position position="277"/>
    </location>
    <ligand>
        <name>substrate</name>
    </ligand>
</feature>
<feature type="binding site" evidence="1">
    <location>
        <position position="283"/>
    </location>
    <ligand>
        <name>Mg(2+)</name>
        <dbReference type="ChEBI" id="CHEBI:18420"/>
        <label>3</label>
    </ligand>
</feature>
<feature type="mutagenesis site" description="Loss of catalytic activity." evidence="2">
    <original>SS</original>
    <variation>AA</variation>
    <location>
        <begin position="126"/>
        <end position="127"/>
    </location>
</feature>
<reference key="1">
    <citation type="journal article" date="2000" name="Nature">
        <title>Sequence and analysis of chromosome 1 of the plant Arabidopsis thaliana.</title>
        <authorList>
            <person name="Theologis A."/>
            <person name="Ecker J.R."/>
            <person name="Palm C.J."/>
            <person name="Federspiel N.A."/>
            <person name="Kaul S."/>
            <person name="White O."/>
            <person name="Alonso J."/>
            <person name="Altafi H."/>
            <person name="Araujo R."/>
            <person name="Bowman C.L."/>
            <person name="Brooks S.Y."/>
            <person name="Buehler E."/>
            <person name="Chan A."/>
            <person name="Chao Q."/>
            <person name="Chen H."/>
            <person name="Cheuk R.F."/>
            <person name="Chin C.W."/>
            <person name="Chung M.K."/>
            <person name="Conn L."/>
            <person name="Conway A.B."/>
            <person name="Conway A.R."/>
            <person name="Creasy T.H."/>
            <person name="Dewar K."/>
            <person name="Dunn P."/>
            <person name="Etgu P."/>
            <person name="Feldblyum T.V."/>
            <person name="Feng J.-D."/>
            <person name="Fong B."/>
            <person name="Fujii C.Y."/>
            <person name="Gill J.E."/>
            <person name="Goldsmith A.D."/>
            <person name="Haas B."/>
            <person name="Hansen N.F."/>
            <person name="Hughes B."/>
            <person name="Huizar L."/>
            <person name="Hunter J.L."/>
            <person name="Jenkins J."/>
            <person name="Johnson-Hopson C."/>
            <person name="Khan S."/>
            <person name="Khaykin E."/>
            <person name="Kim C.J."/>
            <person name="Koo H.L."/>
            <person name="Kremenetskaia I."/>
            <person name="Kurtz D.B."/>
            <person name="Kwan A."/>
            <person name="Lam B."/>
            <person name="Langin-Hooper S."/>
            <person name="Lee A."/>
            <person name="Lee J.M."/>
            <person name="Lenz C.A."/>
            <person name="Li J.H."/>
            <person name="Li Y.-P."/>
            <person name="Lin X."/>
            <person name="Liu S.X."/>
            <person name="Liu Z.A."/>
            <person name="Luros J.S."/>
            <person name="Maiti R."/>
            <person name="Marziali A."/>
            <person name="Militscher J."/>
            <person name="Miranda M."/>
            <person name="Nguyen M."/>
            <person name="Nierman W.C."/>
            <person name="Osborne B.I."/>
            <person name="Pai G."/>
            <person name="Peterson J."/>
            <person name="Pham P.K."/>
            <person name="Rizzo M."/>
            <person name="Rooney T."/>
            <person name="Rowley D."/>
            <person name="Sakano H."/>
            <person name="Salzberg S.L."/>
            <person name="Schwartz J.R."/>
            <person name="Shinn P."/>
            <person name="Southwick A.M."/>
            <person name="Sun H."/>
            <person name="Tallon L.J."/>
            <person name="Tambunga G."/>
            <person name="Toriumi M.J."/>
            <person name="Town C.D."/>
            <person name="Utterback T."/>
            <person name="Van Aken S."/>
            <person name="Vaysberg M."/>
            <person name="Vysotskaia V.S."/>
            <person name="Walker M."/>
            <person name="Wu D."/>
            <person name="Yu G."/>
            <person name="Fraser C.M."/>
            <person name="Venter J.C."/>
            <person name="Davis R.W."/>
        </authorList>
    </citation>
    <scope>NUCLEOTIDE SEQUENCE [LARGE SCALE GENOMIC DNA]</scope>
    <source>
        <strain>cv. Columbia</strain>
    </source>
</reference>
<reference key="2">
    <citation type="journal article" date="2017" name="Plant J.">
        <title>Araport11: a complete reannotation of the Arabidopsis thaliana reference genome.</title>
        <authorList>
            <person name="Cheng C.Y."/>
            <person name="Krishnakumar V."/>
            <person name="Chan A.P."/>
            <person name="Thibaud-Nissen F."/>
            <person name="Schobel S."/>
            <person name="Town C.D."/>
        </authorList>
    </citation>
    <scope>GENOME REANNOTATION</scope>
    <source>
        <strain>cv. Columbia</strain>
    </source>
</reference>
<reference key="3">
    <citation type="journal article" date="2003" name="Science">
        <title>Empirical analysis of transcriptional activity in the Arabidopsis genome.</title>
        <authorList>
            <person name="Yamada K."/>
            <person name="Lim J."/>
            <person name="Dale J.M."/>
            <person name="Chen H."/>
            <person name="Shinn P."/>
            <person name="Palm C.J."/>
            <person name="Southwick A.M."/>
            <person name="Wu H.C."/>
            <person name="Kim C.J."/>
            <person name="Nguyen M."/>
            <person name="Pham P.K."/>
            <person name="Cheuk R.F."/>
            <person name="Karlin-Newmann G."/>
            <person name="Liu S.X."/>
            <person name="Lam B."/>
            <person name="Sakano H."/>
            <person name="Wu T."/>
            <person name="Yu G."/>
            <person name="Miranda M."/>
            <person name="Quach H.L."/>
            <person name="Tripp M."/>
            <person name="Chang C.H."/>
            <person name="Lee J.M."/>
            <person name="Toriumi M.J."/>
            <person name="Chan M.M."/>
            <person name="Tang C.C."/>
            <person name="Onodera C.S."/>
            <person name="Deng J.M."/>
            <person name="Akiyama K."/>
            <person name="Ansari Y."/>
            <person name="Arakawa T."/>
            <person name="Banh J."/>
            <person name="Banno F."/>
            <person name="Bowser L."/>
            <person name="Brooks S.Y."/>
            <person name="Carninci P."/>
            <person name="Chao Q."/>
            <person name="Choy N."/>
            <person name="Enju A."/>
            <person name="Goldsmith A.D."/>
            <person name="Gurjal M."/>
            <person name="Hansen N.F."/>
            <person name="Hayashizaki Y."/>
            <person name="Johnson-Hopson C."/>
            <person name="Hsuan V.W."/>
            <person name="Iida K."/>
            <person name="Karnes M."/>
            <person name="Khan S."/>
            <person name="Koesema E."/>
            <person name="Ishida J."/>
            <person name="Jiang P.X."/>
            <person name="Jones T."/>
            <person name="Kawai J."/>
            <person name="Kamiya A."/>
            <person name="Meyers C."/>
            <person name="Nakajima M."/>
            <person name="Narusaka M."/>
            <person name="Seki M."/>
            <person name="Sakurai T."/>
            <person name="Satou M."/>
            <person name="Tamse R."/>
            <person name="Vaysberg M."/>
            <person name="Wallender E.K."/>
            <person name="Wong C."/>
            <person name="Yamamura Y."/>
            <person name="Yuan S."/>
            <person name="Shinozaki K."/>
            <person name="Davis R.W."/>
            <person name="Theologis A."/>
            <person name="Ecker J.R."/>
        </authorList>
    </citation>
    <scope>NUCLEOTIDE SEQUENCE [LARGE SCALE MRNA]</scope>
    <source>
        <strain>cv. Columbia</strain>
    </source>
</reference>
<reference key="4">
    <citation type="journal article" date="2000" name="Plant J.">
        <title>Decreased expression of two key enzymes in the sucrose biosynthesis pathway, cytosolic fructose-1,6-bisphosphatase and sucrose phosphate synthase, has remarkably different consequences for photosynthetic carbon metabolism in transgenic Arabidopsis thaliana.</title>
        <authorList>
            <person name="Strand A."/>
            <person name="Zrenner R."/>
            <person name="Trevanion S."/>
            <person name="Stitt M."/>
            <person name="Gustafsson P."/>
            <person name="Gardestroem P."/>
        </authorList>
    </citation>
    <scope>FUNCTION</scope>
</reference>
<reference key="5">
    <citation type="journal article" date="2011" name="PLoS Genet.">
        <title>Signaling role of fructose mediated by FINS1/FBP in Arabidopsis thaliana.</title>
        <authorList>
            <person name="Cho Y.H."/>
            <person name="Yoo S.D."/>
        </authorList>
    </citation>
    <scope>FUNCTION</scope>
    <scope>CATALYTIC ACTIVITY</scope>
    <scope>SUBCELLULAR LOCATION</scope>
    <scope>MUTAGENESIS OF 126-SER-SER-127</scope>
</reference>
<reference key="6">
    <citation type="journal article" date="2012" name="Photosyn. Res.">
        <title>Manipulation of triose phosphate/phosphate translocator and cytosolic fructose-1,6-bisphosphatase, the key components in photosynthetic sucrose synthesis, enhances the source capacity of transgenic Arabidopsis plants.</title>
        <authorList>
            <person name="Cho M.H."/>
            <person name="Jang A."/>
            <person name="Bhoo S.H."/>
            <person name="Jeon J.S."/>
            <person name="Hahn T.R."/>
        </authorList>
    </citation>
    <scope>FUNCTION</scope>
</reference>
<reference key="7">
    <citation type="journal article" date="2015" name="J. Exp. Bot.">
        <title>Disruption of both chloroplastic and cytosolic FBPase genes results in a dwarf phenotype and important starch and metabolite changes in Arabidopsis thaliana.</title>
        <authorList>
            <person name="Rojas-Gonzalez J.A."/>
            <person name="Soto-Suarez M."/>
            <person name="Garcia-Diaz A."/>
            <person name="Romero-Puertas M.C."/>
            <person name="Sandalio L.M."/>
            <person name="Merida A."/>
            <person name="Thormaehlen I."/>
            <person name="Geigenberger P."/>
            <person name="Serrato A.J."/>
            <person name="Sahrawy M."/>
        </authorList>
    </citation>
    <scope>FUNCTION</scope>
    <scope>DISRUPTION PHENOTYPE</scope>
</reference>
<dbReference type="EC" id="3.1.3.11" evidence="2"/>
<dbReference type="EMBL" id="AC009526">
    <property type="protein sequence ID" value="AAF63117.1"/>
    <property type="molecule type" value="Genomic_DNA"/>
</dbReference>
<dbReference type="EMBL" id="CP002684">
    <property type="protein sequence ID" value="AEE31985.1"/>
    <property type="molecule type" value="Genomic_DNA"/>
</dbReference>
<dbReference type="EMBL" id="BT000470">
    <property type="protein sequence ID" value="AAN17447.1"/>
    <property type="molecule type" value="mRNA"/>
</dbReference>
<dbReference type="EMBL" id="BT008732">
    <property type="protein sequence ID" value="AAP42745.1"/>
    <property type="molecule type" value="mRNA"/>
</dbReference>
<dbReference type="PIR" id="H96499">
    <property type="entry name" value="H96499"/>
</dbReference>
<dbReference type="SMR" id="Q9MA79"/>
<dbReference type="BioGRID" id="26178">
    <property type="interactions" value="1"/>
</dbReference>
<dbReference type="FunCoup" id="Q9MA79">
    <property type="interactions" value="2553"/>
</dbReference>
<dbReference type="IntAct" id="Q9MA79">
    <property type="interactions" value="1"/>
</dbReference>
<dbReference type="STRING" id="3702.Q9MA79"/>
<dbReference type="PaxDb" id="3702-AT1G43670.1"/>
<dbReference type="ProteomicsDB" id="222257"/>
<dbReference type="EnsemblPlants" id="AT1G43670.1">
    <property type="protein sequence ID" value="AT1G43670.1"/>
    <property type="gene ID" value="AT1G43670"/>
</dbReference>
<dbReference type="GeneID" id="840953"/>
<dbReference type="Gramene" id="AT1G43670.1">
    <property type="protein sequence ID" value="AT1G43670.1"/>
    <property type="gene ID" value="AT1G43670"/>
</dbReference>
<dbReference type="KEGG" id="ath:AT1G43670"/>
<dbReference type="Araport" id="AT1G43670"/>
<dbReference type="TAIR" id="AT1G43670">
    <property type="gene designation" value="FBP"/>
</dbReference>
<dbReference type="eggNOG" id="KOG1458">
    <property type="taxonomic scope" value="Eukaryota"/>
</dbReference>
<dbReference type="HOGENOM" id="CLU_039977_1_0_1"/>
<dbReference type="InParanoid" id="Q9MA79"/>
<dbReference type="OMA" id="YIPENCP"/>
<dbReference type="OrthoDB" id="10256725at2759"/>
<dbReference type="PhylomeDB" id="Q9MA79"/>
<dbReference type="BioCyc" id="ARA:AT1G43670-MONOMER"/>
<dbReference type="BioCyc" id="MetaCyc:AT1G43670-MONOMER"/>
<dbReference type="CD-CODE" id="4299E36E">
    <property type="entry name" value="Nucleolus"/>
</dbReference>
<dbReference type="PRO" id="PR:Q9MA79"/>
<dbReference type="Proteomes" id="UP000006548">
    <property type="component" value="Chromosome 1"/>
</dbReference>
<dbReference type="ExpressionAtlas" id="Q9MA79">
    <property type="expression patterns" value="baseline and differential"/>
</dbReference>
<dbReference type="GO" id="GO:0005737">
    <property type="term" value="C:cytoplasm"/>
    <property type="evidence" value="ECO:0000314"/>
    <property type="project" value="TAIR"/>
</dbReference>
<dbReference type="GO" id="GO:0005829">
    <property type="term" value="C:cytosol"/>
    <property type="evidence" value="ECO:0007005"/>
    <property type="project" value="TAIR"/>
</dbReference>
<dbReference type="GO" id="GO:0005634">
    <property type="term" value="C:nucleus"/>
    <property type="evidence" value="ECO:0000314"/>
    <property type="project" value="TAIR"/>
</dbReference>
<dbReference type="GO" id="GO:0042132">
    <property type="term" value="F:fructose 1,6-bisphosphate 1-phosphatase activity"/>
    <property type="evidence" value="ECO:0000314"/>
    <property type="project" value="TAIR"/>
</dbReference>
<dbReference type="GO" id="GO:0046872">
    <property type="term" value="F:metal ion binding"/>
    <property type="evidence" value="ECO:0007669"/>
    <property type="project" value="UniProtKB-KW"/>
</dbReference>
<dbReference type="GO" id="GO:0030388">
    <property type="term" value="P:fructose 1,6-bisphosphate metabolic process"/>
    <property type="evidence" value="ECO:0000314"/>
    <property type="project" value="TAIR"/>
</dbReference>
<dbReference type="GO" id="GO:0015979">
    <property type="term" value="P:photosynthesis"/>
    <property type="evidence" value="ECO:0000315"/>
    <property type="project" value="TAIR"/>
</dbReference>
<dbReference type="GO" id="GO:0009737">
    <property type="term" value="P:response to abscisic acid"/>
    <property type="evidence" value="ECO:0000315"/>
    <property type="project" value="TAIR"/>
</dbReference>
<dbReference type="GO" id="GO:0009750">
    <property type="term" value="P:response to fructose"/>
    <property type="evidence" value="ECO:0000315"/>
    <property type="project" value="TAIR"/>
</dbReference>
<dbReference type="GO" id="GO:0005983">
    <property type="term" value="P:starch catabolic process"/>
    <property type="evidence" value="ECO:0000315"/>
    <property type="project" value="TAIR"/>
</dbReference>
<dbReference type="GO" id="GO:0005986">
    <property type="term" value="P:sucrose biosynthetic process"/>
    <property type="evidence" value="ECO:0000315"/>
    <property type="project" value="TAIR"/>
</dbReference>
<dbReference type="CDD" id="cd00354">
    <property type="entry name" value="FBPase"/>
    <property type="match status" value="1"/>
</dbReference>
<dbReference type="FunFam" id="3.40.190.80:FF:000001">
    <property type="entry name" value="Fructose-1,6-bisphosphatase class 1"/>
    <property type="match status" value="1"/>
</dbReference>
<dbReference type="FunFam" id="3.30.540.10:FF:000008">
    <property type="entry name" value="Fructose-1,6-bisphosphatase, cytosolic"/>
    <property type="match status" value="1"/>
</dbReference>
<dbReference type="Gene3D" id="3.40.190.80">
    <property type="match status" value="1"/>
</dbReference>
<dbReference type="Gene3D" id="3.30.540.10">
    <property type="entry name" value="Fructose-1,6-Bisphosphatase, subunit A, domain 1"/>
    <property type="match status" value="1"/>
</dbReference>
<dbReference type="HAMAP" id="MF_01855">
    <property type="entry name" value="FBPase_class1"/>
    <property type="match status" value="1"/>
</dbReference>
<dbReference type="InterPro" id="IPR044015">
    <property type="entry name" value="FBPase_C_dom"/>
</dbReference>
<dbReference type="InterPro" id="IPR000146">
    <property type="entry name" value="FBPase_class-1"/>
</dbReference>
<dbReference type="InterPro" id="IPR033391">
    <property type="entry name" value="FBPase_N"/>
</dbReference>
<dbReference type="InterPro" id="IPR028343">
    <property type="entry name" value="FBPtase"/>
</dbReference>
<dbReference type="InterPro" id="IPR020548">
    <property type="entry name" value="Fructose_bisphosphatase_AS"/>
</dbReference>
<dbReference type="NCBIfam" id="NF006778">
    <property type="entry name" value="PRK09293.1-1"/>
    <property type="match status" value="1"/>
</dbReference>
<dbReference type="NCBIfam" id="NF006779">
    <property type="entry name" value="PRK09293.1-3"/>
    <property type="match status" value="1"/>
</dbReference>
<dbReference type="PANTHER" id="PTHR11556:SF41">
    <property type="entry name" value="FRUCTOSE-1,6-BISPHOSPHATASE, CYTOSOLIC"/>
    <property type="match status" value="1"/>
</dbReference>
<dbReference type="PANTHER" id="PTHR11556">
    <property type="entry name" value="FRUCTOSE-1,6-BISPHOSPHATASE-RELATED"/>
    <property type="match status" value="1"/>
</dbReference>
<dbReference type="Pfam" id="PF00316">
    <property type="entry name" value="FBPase"/>
    <property type="match status" value="1"/>
</dbReference>
<dbReference type="Pfam" id="PF18913">
    <property type="entry name" value="FBPase_C"/>
    <property type="match status" value="1"/>
</dbReference>
<dbReference type="PIRSF" id="PIRSF500210">
    <property type="entry name" value="FBPtase"/>
    <property type="match status" value="1"/>
</dbReference>
<dbReference type="PIRSF" id="PIRSF000904">
    <property type="entry name" value="FBPtase_SBPase"/>
    <property type="match status" value="1"/>
</dbReference>
<dbReference type="PRINTS" id="PR00115">
    <property type="entry name" value="F16BPHPHTASE"/>
</dbReference>
<dbReference type="SUPFAM" id="SSF56655">
    <property type="entry name" value="Carbohydrate phosphatase"/>
    <property type="match status" value="1"/>
</dbReference>
<dbReference type="PROSITE" id="PS00124">
    <property type="entry name" value="FBPASE"/>
    <property type="match status" value="1"/>
</dbReference>
<gene>
    <name evidence="5" type="primary">CYFBP</name>
    <name evidence="4" type="synonym">FINS1</name>
    <name type="ordered locus">At1g43670</name>
    <name type="ORF">F2J6.2</name>
</gene>
<name>F16P2_ARATH</name>
<organism>
    <name type="scientific">Arabidopsis thaliana</name>
    <name type="common">Mouse-ear cress</name>
    <dbReference type="NCBI Taxonomy" id="3702"/>
    <lineage>
        <taxon>Eukaryota</taxon>
        <taxon>Viridiplantae</taxon>
        <taxon>Streptophyta</taxon>
        <taxon>Embryophyta</taxon>
        <taxon>Tracheophyta</taxon>
        <taxon>Spermatophyta</taxon>
        <taxon>Magnoliopsida</taxon>
        <taxon>eudicotyledons</taxon>
        <taxon>Gunneridae</taxon>
        <taxon>Pentapetalae</taxon>
        <taxon>rosids</taxon>
        <taxon>malvids</taxon>
        <taxon>Brassicales</taxon>
        <taxon>Brassicaceae</taxon>
        <taxon>Camelineae</taxon>
        <taxon>Arabidopsis</taxon>
    </lineage>
</organism>